<dbReference type="EMBL" id="CP000116">
    <property type="protein sequence ID" value="AAZ98446.1"/>
    <property type="molecule type" value="Genomic_DNA"/>
</dbReference>
<dbReference type="RefSeq" id="WP_011313005.1">
    <property type="nucleotide sequence ID" value="NC_007404.1"/>
</dbReference>
<dbReference type="SMR" id="Q3SG10"/>
<dbReference type="STRING" id="292415.Tbd_2493"/>
<dbReference type="KEGG" id="tbd:Tbd_2493"/>
<dbReference type="eggNOG" id="COG0216">
    <property type="taxonomic scope" value="Bacteria"/>
</dbReference>
<dbReference type="HOGENOM" id="CLU_036856_0_1_4"/>
<dbReference type="OrthoDB" id="9806673at2"/>
<dbReference type="Proteomes" id="UP000008291">
    <property type="component" value="Chromosome"/>
</dbReference>
<dbReference type="GO" id="GO:0005737">
    <property type="term" value="C:cytoplasm"/>
    <property type="evidence" value="ECO:0007669"/>
    <property type="project" value="UniProtKB-SubCell"/>
</dbReference>
<dbReference type="GO" id="GO:0016149">
    <property type="term" value="F:translation release factor activity, codon specific"/>
    <property type="evidence" value="ECO:0007669"/>
    <property type="project" value="UniProtKB-UniRule"/>
</dbReference>
<dbReference type="FunFam" id="3.30.160.20:FF:000004">
    <property type="entry name" value="Peptide chain release factor 1"/>
    <property type="match status" value="1"/>
</dbReference>
<dbReference type="FunFam" id="3.30.70.1660:FF:000002">
    <property type="entry name" value="Peptide chain release factor 1"/>
    <property type="match status" value="1"/>
</dbReference>
<dbReference type="FunFam" id="3.30.70.1660:FF:000004">
    <property type="entry name" value="Peptide chain release factor 1"/>
    <property type="match status" value="1"/>
</dbReference>
<dbReference type="Gene3D" id="3.30.160.20">
    <property type="match status" value="1"/>
</dbReference>
<dbReference type="Gene3D" id="3.30.70.1660">
    <property type="match status" value="1"/>
</dbReference>
<dbReference type="Gene3D" id="6.10.140.1950">
    <property type="match status" value="1"/>
</dbReference>
<dbReference type="HAMAP" id="MF_00093">
    <property type="entry name" value="Rel_fac_1"/>
    <property type="match status" value="1"/>
</dbReference>
<dbReference type="InterPro" id="IPR005139">
    <property type="entry name" value="PCRF"/>
</dbReference>
<dbReference type="InterPro" id="IPR000352">
    <property type="entry name" value="Pep_chain_release_fac_I"/>
</dbReference>
<dbReference type="InterPro" id="IPR045853">
    <property type="entry name" value="Pep_chain_release_fac_I_sf"/>
</dbReference>
<dbReference type="InterPro" id="IPR050057">
    <property type="entry name" value="Prokaryotic/Mito_RF"/>
</dbReference>
<dbReference type="InterPro" id="IPR004373">
    <property type="entry name" value="RF-1"/>
</dbReference>
<dbReference type="NCBIfam" id="TIGR00019">
    <property type="entry name" value="prfA"/>
    <property type="match status" value="1"/>
</dbReference>
<dbReference type="NCBIfam" id="NF001859">
    <property type="entry name" value="PRK00591.1"/>
    <property type="match status" value="1"/>
</dbReference>
<dbReference type="PANTHER" id="PTHR43804">
    <property type="entry name" value="LD18447P"/>
    <property type="match status" value="1"/>
</dbReference>
<dbReference type="PANTHER" id="PTHR43804:SF7">
    <property type="entry name" value="LD18447P"/>
    <property type="match status" value="1"/>
</dbReference>
<dbReference type="Pfam" id="PF03462">
    <property type="entry name" value="PCRF"/>
    <property type="match status" value="1"/>
</dbReference>
<dbReference type="Pfam" id="PF00472">
    <property type="entry name" value="RF-1"/>
    <property type="match status" value="1"/>
</dbReference>
<dbReference type="SMART" id="SM00937">
    <property type="entry name" value="PCRF"/>
    <property type="match status" value="1"/>
</dbReference>
<dbReference type="SUPFAM" id="SSF75620">
    <property type="entry name" value="Release factor"/>
    <property type="match status" value="1"/>
</dbReference>
<dbReference type="PROSITE" id="PS00745">
    <property type="entry name" value="RF_PROK_I"/>
    <property type="match status" value="1"/>
</dbReference>
<proteinExistence type="inferred from homology"/>
<keyword id="KW-0963">Cytoplasm</keyword>
<keyword id="KW-0488">Methylation</keyword>
<keyword id="KW-0648">Protein biosynthesis</keyword>
<keyword id="KW-1185">Reference proteome</keyword>
<accession>Q3SG10</accession>
<sequence>MKATLADKLARADERLEELDALLAQPEVAADMDSYRKLTREHAELSPVVGLYRQYKQVEADQKTAQEMLADADMRELAEAELADGAARITELENELQTALLPRDPNDERNIFLEIRAGTGGDESALFAGNLLRMYTRYAERQRWKVEIVSESPGEVGGYKEVIVRIVGEGAYSRLKFESGGHRVQRVPETESQGRIHTSACTVAVMPEAAEVGEVDINPADLRIDTFRASGAGGQHINKTDSAVRITHLPTGLVVECQDDRSQHRNRAQAMSVLAARLKDREIQAQQASEASTRKSLIGSGDRSDRIRTYNFPQGRITDHRINLTLYKIDAVMDGDLGELLDALAAEHQAAQLATLSGEG</sequence>
<organism>
    <name type="scientific">Thiobacillus denitrificans (strain ATCC 25259 / T1)</name>
    <dbReference type="NCBI Taxonomy" id="292415"/>
    <lineage>
        <taxon>Bacteria</taxon>
        <taxon>Pseudomonadati</taxon>
        <taxon>Pseudomonadota</taxon>
        <taxon>Betaproteobacteria</taxon>
        <taxon>Nitrosomonadales</taxon>
        <taxon>Thiobacillaceae</taxon>
        <taxon>Thiobacillus</taxon>
    </lineage>
</organism>
<reference key="1">
    <citation type="journal article" date="2006" name="J. Bacteriol.">
        <title>The genome sequence of the obligately chemolithoautotrophic, facultatively anaerobic bacterium Thiobacillus denitrificans.</title>
        <authorList>
            <person name="Beller H.R."/>
            <person name="Chain P.S."/>
            <person name="Letain T.E."/>
            <person name="Chakicherla A."/>
            <person name="Larimer F.W."/>
            <person name="Richardson P.M."/>
            <person name="Coleman M.A."/>
            <person name="Wood A.P."/>
            <person name="Kelly D.P."/>
        </authorList>
    </citation>
    <scope>NUCLEOTIDE SEQUENCE [LARGE SCALE GENOMIC DNA]</scope>
    <source>
        <strain>ATCC 25259 / T1</strain>
    </source>
</reference>
<gene>
    <name evidence="1" type="primary">prfA</name>
    <name type="ordered locus">Tbd_2493</name>
</gene>
<name>RF1_THIDA</name>
<feature type="chain" id="PRO_0000263383" description="Peptide chain release factor 1">
    <location>
        <begin position="1"/>
        <end position="360"/>
    </location>
</feature>
<feature type="region of interest" description="Disordered" evidence="2">
    <location>
        <begin position="285"/>
        <end position="305"/>
    </location>
</feature>
<feature type="compositionally biased region" description="Polar residues" evidence="2">
    <location>
        <begin position="285"/>
        <end position="295"/>
    </location>
</feature>
<feature type="modified residue" description="N5-methylglutamine" evidence="1">
    <location>
        <position position="235"/>
    </location>
</feature>
<comment type="function">
    <text evidence="1">Peptide chain release factor 1 directs the termination of translation in response to the peptide chain termination codons UAG and UAA.</text>
</comment>
<comment type="subcellular location">
    <subcellularLocation>
        <location evidence="1">Cytoplasm</location>
    </subcellularLocation>
</comment>
<comment type="PTM">
    <text evidence="1">Methylated by PrmC. Methylation increases the termination efficiency of RF1.</text>
</comment>
<comment type="similarity">
    <text evidence="1">Belongs to the prokaryotic/mitochondrial release factor family.</text>
</comment>
<protein>
    <recommendedName>
        <fullName evidence="1">Peptide chain release factor 1</fullName>
        <shortName evidence="1">RF-1</shortName>
    </recommendedName>
</protein>
<evidence type="ECO:0000255" key="1">
    <source>
        <dbReference type="HAMAP-Rule" id="MF_00093"/>
    </source>
</evidence>
<evidence type="ECO:0000256" key="2">
    <source>
        <dbReference type="SAM" id="MobiDB-lite"/>
    </source>
</evidence>